<proteinExistence type="inferred from homology"/>
<gene>
    <name evidence="1" type="primary">glgA</name>
    <name type="ordered locus">XCC0408</name>
</gene>
<dbReference type="EC" id="2.4.1.21" evidence="1"/>
<dbReference type="EMBL" id="AE008922">
    <property type="protein sequence ID" value="AAM39726.1"/>
    <property type="molecule type" value="Genomic_DNA"/>
</dbReference>
<dbReference type="RefSeq" id="NP_635802.1">
    <property type="nucleotide sequence ID" value="NC_003902.1"/>
</dbReference>
<dbReference type="SMR" id="Q8PDD2"/>
<dbReference type="STRING" id="190485.XCC0408"/>
<dbReference type="CAZy" id="GT5">
    <property type="family name" value="Glycosyltransferase Family 5"/>
</dbReference>
<dbReference type="EnsemblBacteria" id="AAM39726">
    <property type="protein sequence ID" value="AAM39726"/>
    <property type="gene ID" value="XCC0408"/>
</dbReference>
<dbReference type="KEGG" id="xcc:XCC0408"/>
<dbReference type="PATRIC" id="fig|190485.4.peg.448"/>
<dbReference type="eggNOG" id="COG0297">
    <property type="taxonomic scope" value="Bacteria"/>
</dbReference>
<dbReference type="HOGENOM" id="CLU_009583_18_2_6"/>
<dbReference type="OrthoDB" id="9808590at2"/>
<dbReference type="UniPathway" id="UPA00164"/>
<dbReference type="Proteomes" id="UP000001010">
    <property type="component" value="Chromosome"/>
</dbReference>
<dbReference type="GO" id="GO:0009011">
    <property type="term" value="F:alpha-1,4-glucan glucosyltransferase (ADP-glucose donor) activity"/>
    <property type="evidence" value="ECO:0007669"/>
    <property type="project" value="UniProtKB-UniRule"/>
</dbReference>
<dbReference type="GO" id="GO:0004373">
    <property type="term" value="F:alpha-1,4-glucan glucosyltransferase (UDP-glucose donor) activity"/>
    <property type="evidence" value="ECO:0007669"/>
    <property type="project" value="InterPro"/>
</dbReference>
<dbReference type="GO" id="GO:0005978">
    <property type="term" value="P:glycogen biosynthetic process"/>
    <property type="evidence" value="ECO:0007669"/>
    <property type="project" value="UniProtKB-UniRule"/>
</dbReference>
<dbReference type="CDD" id="cd03791">
    <property type="entry name" value="GT5_Glycogen_synthase_DULL1-like"/>
    <property type="match status" value="1"/>
</dbReference>
<dbReference type="Gene3D" id="3.40.50.2000">
    <property type="entry name" value="Glycogen Phosphorylase B"/>
    <property type="match status" value="2"/>
</dbReference>
<dbReference type="HAMAP" id="MF_00484">
    <property type="entry name" value="Glycogen_synth"/>
    <property type="match status" value="1"/>
</dbReference>
<dbReference type="InterPro" id="IPR001296">
    <property type="entry name" value="Glyco_trans_1"/>
</dbReference>
<dbReference type="InterPro" id="IPR011835">
    <property type="entry name" value="GS/SS"/>
</dbReference>
<dbReference type="InterPro" id="IPR013534">
    <property type="entry name" value="Starch_synth_cat_dom"/>
</dbReference>
<dbReference type="NCBIfam" id="TIGR02095">
    <property type="entry name" value="glgA"/>
    <property type="match status" value="1"/>
</dbReference>
<dbReference type="NCBIfam" id="NF001899">
    <property type="entry name" value="PRK00654.1-2"/>
    <property type="match status" value="1"/>
</dbReference>
<dbReference type="NCBIfam" id="NF001901">
    <property type="entry name" value="PRK00654.1-5"/>
    <property type="match status" value="1"/>
</dbReference>
<dbReference type="PANTHER" id="PTHR45825:SF8">
    <property type="entry name" value="GLYCOGEN SYNTHASE"/>
    <property type="match status" value="1"/>
</dbReference>
<dbReference type="PANTHER" id="PTHR45825">
    <property type="entry name" value="GRANULE-BOUND STARCH SYNTHASE 1, CHLOROPLASTIC/AMYLOPLASTIC"/>
    <property type="match status" value="1"/>
</dbReference>
<dbReference type="Pfam" id="PF08323">
    <property type="entry name" value="Glyco_transf_5"/>
    <property type="match status" value="1"/>
</dbReference>
<dbReference type="Pfam" id="PF00534">
    <property type="entry name" value="Glycos_transf_1"/>
    <property type="match status" value="1"/>
</dbReference>
<dbReference type="SUPFAM" id="SSF53756">
    <property type="entry name" value="UDP-Glycosyltransferase/glycogen phosphorylase"/>
    <property type="match status" value="1"/>
</dbReference>
<protein>
    <recommendedName>
        <fullName evidence="1">Glycogen synthase</fullName>
        <ecNumber evidence="1">2.4.1.21</ecNumber>
    </recommendedName>
    <alternativeName>
        <fullName evidence="1">Starch [bacterial glycogen] synthase</fullName>
    </alternativeName>
</protein>
<accession>Q8PDD2</accession>
<evidence type="ECO:0000255" key="1">
    <source>
        <dbReference type="HAMAP-Rule" id="MF_00484"/>
    </source>
</evidence>
<keyword id="KW-0320">Glycogen biosynthesis</keyword>
<keyword id="KW-0328">Glycosyltransferase</keyword>
<keyword id="KW-1185">Reference proteome</keyword>
<keyword id="KW-0808">Transferase</keyword>
<organism>
    <name type="scientific">Xanthomonas campestris pv. campestris (strain ATCC 33913 / DSM 3586 / NCPPB 528 / LMG 568 / P 25)</name>
    <dbReference type="NCBI Taxonomy" id="190485"/>
    <lineage>
        <taxon>Bacteria</taxon>
        <taxon>Pseudomonadati</taxon>
        <taxon>Pseudomonadota</taxon>
        <taxon>Gammaproteobacteria</taxon>
        <taxon>Lysobacterales</taxon>
        <taxon>Lysobacteraceae</taxon>
        <taxon>Xanthomonas</taxon>
    </lineage>
</organism>
<comment type="function">
    <text evidence="1">Synthesizes alpha-1,4-glucan chains using ADP-glucose.</text>
</comment>
<comment type="catalytic activity">
    <reaction evidence="1">
        <text>[(1-&gt;4)-alpha-D-glucosyl](n) + ADP-alpha-D-glucose = [(1-&gt;4)-alpha-D-glucosyl](n+1) + ADP + H(+)</text>
        <dbReference type="Rhea" id="RHEA:18189"/>
        <dbReference type="Rhea" id="RHEA-COMP:9584"/>
        <dbReference type="Rhea" id="RHEA-COMP:9587"/>
        <dbReference type="ChEBI" id="CHEBI:15378"/>
        <dbReference type="ChEBI" id="CHEBI:15444"/>
        <dbReference type="ChEBI" id="CHEBI:57498"/>
        <dbReference type="ChEBI" id="CHEBI:456216"/>
        <dbReference type="EC" id="2.4.1.21"/>
    </reaction>
</comment>
<comment type="pathway">
    <text evidence="1">Glycan biosynthesis; glycogen biosynthesis.</text>
</comment>
<comment type="similarity">
    <text evidence="1">Belongs to the glycosyltransferase 1 family. Bacterial/plant glycogen synthase subfamily.</text>
</comment>
<reference key="1">
    <citation type="journal article" date="2002" name="Nature">
        <title>Comparison of the genomes of two Xanthomonas pathogens with differing host specificities.</title>
        <authorList>
            <person name="da Silva A.C.R."/>
            <person name="Ferro J.A."/>
            <person name="Reinach F.C."/>
            <person name="Farah C.S."/>
            <person name="Furlan L.R."/>
            <person name="Quaggio R.B."/>
            <person name="Monteiro-Vitorello C.B."/>
            <person name="Van Sluys M.A."/>
            <person name="Almeida N.F. Jr."/>
            <person name="Alves L.M.C."/>
            <person name="do Amaral A.M."/>
            <person name="Bertolini M.C."/>
            <person name="Camargo L.E.A."/>
            <person name="Camarotte G."/>
            <person name="Cannavan F."/>
            <person name="Cardozo J."/>
            <person name="Chambergo F."/>
            <person name="Ciapina L.P."/>
            <person name="Cicarelli R.M.B."/>
            <person name="Coutinho L.L."/>
            <person name="Cursino-Santos J.R."/>
            <person name="El-Dorry H."/>
            <person name="Faria J.B."/>
            <person name="Ferreira A.J.S."/>
            <person name="Ferreira R.C.C."/>
            <person name="Ferro M.I.T."/>
            <person name="Formighieri E.F."/>
            <person name="Franco M.C."/>
            <person name="Greggio C.C."/>
            <person name="Gruber A."/>
            <person name="Katsuyama A.M."/>
            <person name="Kishi L.T."/>
            <person name="Leite R.P."/>
            <person name="Lemos E.G.M."/>
            <person name="Lemos M.V.F."/>
            <person name="Locali E.C."/>
            <person name="Machado M.A."/>
            <person name="Madeira A.M.B.N."/>
            <person name="Martinez-Rossi N.M."/>
            <person name="Martins E.C."/>
            <person name="Meidanis J."/>
            <person name="Menck C.F.M."/>
            <person name="Miyaki C.Y."/>
            <person name="Moon D.H."/>
            <person name="Moreira L.M."/>
            <person name="Novo M.T.M."/>
            <person name="Okura V.K."/>
            <person name="Oliveira M.C."/>
            <person name="Oliveira V.R."/>
            <person name="Pereira H.A."/>
            <person name="Rossi A."/>
            <person name="Sena J.A.D."/>
            <person name="Silva C."/>
            <person name="de Souza R.F."/>
            <person name="Spinola L.A.F."/>
            <person name="Takita M.A."/>
            <person name="Tamura R.E."/>
            <person name="Teixeira E.C."/>
            <person name="Tezza R.I.D."/>
            <person name="Trindade dos Santos M."/>
            <person name="Truffi D."/>
            <person name="Tsai S.M."/>
            <person name="White F.F."/>
            <person name="Setubal J.C."/>
            <person name="Kitajima J.P."/>
        </authorList>
    </citation>
    <scope>NUCLEOTIDE SEQUENCE [LARGE SCALE GENOMIC DNA]</scope>
    <source>
        <strain>ATCC 33913 / DSM 3586 / NCPPB 528 / LMG 568 / P 25</strain>
    </source>
</reference>
<feature type="chain" id="PRO_0000188665" description="Glycogen synthase">
    <location>
        <begin position="1"/>
        <end position="474"/>
    </location>
</feature>
<feature type="binding site" evidence="1">
    <location>
        <position position="12"/>
    </location>
    <ligand>
        <name>ADP-alpha-D-glucose</name>
        <dbReference type="ChEBI" id="CHEBI:57498"/>
    </ligand>
</feature>
<name>GLGA_XANCP</name>
<sequence length="474" mass="50895">MFVVSEMADFIKAGGLGDVAAALPRALRHRYDVRVLIPGYRAVLARAGKVEIVGRVLAHAALPACDIGRIVQSDGLPIYILLSKELFERDGSPYVSTSGSEFEDNAIRFATLSHAAAQIAAGRAGLGWRPRLLHLNDWPCALAAAYVRWSGGTTPCLLTIHNLAYQGLVPYSMAAALGIPAERVSELEFYGQMSFLRGGIVHADHVNTVSVSYAQQITGPAQGCGLDRLLAGRAAKGALSGIVNGIDASWDPRTDEYLDSHFSVNHWQGRQANAAQVRKAFGLRESTGPLFAVVSRLVHQKGLDLICEVAPQIVAAGGQIAVIGGGEPEIEQQVAELTRRYPGQVGAFIGFEEGLARRMFAGADFLLMPSRFEPCGLSQMYAQRFGCLPIAHATGGLIDTVDDGVTGFLFQQASAEALRRCLERAFRTFRLPSLLSAMRRAAMLRPSGWDVAGKKYISLYERTAATAPAVATVS</sequence>